<sequence length="631" mass="70172">MLYHETFDVIVVGGGHAGTEAALAAARTGQRTLLLTHNIDTLGQMSCNPAIGGIGKGHLVKEVDAMGGLMAQAIDHAGIQFRTLNASKGPAVRATRAQADRALYKAYVRNVLENTPNLTLFQQAVDDVIVEHDHIRGVVTQMGLKFHAKAVVLTVGTFLGGKIHIGLENYAGGRAGDPPSIALAHRLRELPFRVDRLKTGTPPRIDANSVDFSVLEAQHGDNPTPVFSFMGKREHHPRQIPCYITHTNERTHDVIRANLDRSPMYAGIIEGIGPRYCPSIEDKVMRFADKDSHQIFIEPEGLTTTELYPNGISTSLPFDVQVQIVRSMKGFENAHIVRPGYAIEYDFFDPRDLKQTYETKYIHGLFFAGQINGTTGYEEAAAQGLMAGLNASLYSQDKEGWSPRRDQAYMGVLIDDLSTMGTKEPYRMFTSRAEYRLLLREDNADLRLTEKARELGLVDDARWARFNQKIDNMAKERQRLQETWMNPNSVGVEQLNTLLKTPMSREASGEDLLRRPEMTYELLTTLPAFAPALEDAEAAEQVEIQVKYDGYIQRQQDEIEKSLRHEHTKLPAELDYKQVKGLSNEVVLKLNAAKPETIGIASRISGITPAAISILLVHLKKHGMLKKGEAA</sequence>
<comment type="function">
    <text evidence="1">NAD-binding protein involved in the addition of a carboxymethylaminomethyl (cmnm) group at the wobble position (U34) of certain tRNAs, forming tRNA-cmnm(5)s(2)U34.</text>
</comment>
<comment type="cofactor">
    <cofactor evidence="1">
        <name>FAD</name>
        <dbReference type="ChEBI" id="CHEBI:57692"/>
    </cofactor>
</comment>
<comment type="subunit">
    <text evidence="1">Homodimer. Heterotetramer of two MnmE and two MnmG subunits.</text>
</comment>
<comment type="subcellular location">
    <subcellularLocation>
        <location evidence="1">Cytoplasm</location>
    </subcellularLocation>
</comment>
<comment type="similarity">
    <text evidence="1">Belongs to the MnmG family.</text>
</comment>
<organism>
    <name type="scientific">Vibrio cholerae serotype O1 (strain ATCC 39541 / Classical Ogawa 395 / O395)</name>
    <dbReference type="NCBI Taxonomy" id="345073"/>
    <lineage>
        <taxon>Bacteria</taxon>
        <taxon>Pseudomonadati</taxon>
        <taxon>Pseudomonadota</taxon>
        <taxon>Gammaproteobacteria</taxon>
        <taxon>Vibrionales</taxon>
        <taxon>Vibrionaceae</taxon>
        <taxon>Vibrio</taxon>
    </lineage>
</organism>
<proteinExistence type="inferred from homology"/>
<dbReference type="EMBL" id="CP000627">
    <property type="protein sequence ID" value="ABQ21043.1"/>
    <property type="molecule type" value="Genomic_DNA"/>
</dbReference>
<dbReference type="EMBL" id="CP001235">
    <property type="protein sequence ID" value="ACP08207.1"/>
    <property type="molecule type" value="Genomic_DNA"/>
</dbReference>
<dbReference type="RefSeq" id="WP_000965608.1">
    <property type="nucleotide sequence ID" value="NZ_JAACZH010000018.1"/>
</dbReference>
<dbReference type="SMR" id="A5F468"/>
<dbReference type="KEGG" id="vco:VC0395_A2517"/>
<dbReference type="KEGG" id="vcr:VC395_0180"/>
<dbReference type="PATRIC" id="fig|345073.21.peg.169"/>
<dbReference type="eggNOG" id="COG0445">
    <property type="taxonomic scope" value="Bacteria"/>
</dbReference>
<dbReference type="HOGENOM" id="CLU_007831_2_2_6"/>
<dbReference type="OrthoDB" id="9815560at2"/>
<dbReference type="Proteomes" id="UP000000249">
    <property type="component" value="Chromosome 2"/>
</dbReference>
<dbReference type="GO" id="GO:0005829">
    <property type="term" value="C:cytosol"/>
    <property type="evidence" value="ECO:0007669"/>
    <property type="project" value="TreeGrafter"/>
</dbReference>
<dbReference type="GO" id="GO:0050660">
    <property type="term" value="F:flavin adenine dinucleotide binding"/>
    <property type="evidence" value="ECO:0007669"/>
    <property type="project" value="UniProtKB-UniRule"/>
</dbReference>
<dbReference type="GO" id="GO:0030488">
    <property type="term" value="P:tRNA methylation"/>
    <property type="evidence" value="ECO:0007669"/>
    <property type="project" value="TreeGrafter"/>
</dbReference>
<dbReference type="GO" id="GO:0002098">
    <property type="term" value="P:tRNA wobble uridine modification"/>
    <property type="evidence" value="ECO:0007669"/>
    <property type="project" value="InterPro"/>
</dbReference>
<dbReference type="FunFam" id="1.10.10.1800:FF:000001">
    <property type="entry name" value="tRNA uridine 5-carboxymethylaminomethyl modification enzyme MnmG"/>
    <property type="match status" value="1"/>
</dbReference>
<dbReference type="FunFam" id="1.10.150.570:FF:000001">
    <property type="entry name" value="tRNA uridine 5-carboxymethylaminomethyl modification enzyme MnmG"/>
    <property type="match status" value="1"/>
</dbReference>
<dbReference type="FunFam" id="3.50.50.60:FF:000002">
    <property type="entry name" value="tRNA uridine 5-carboxymethylaminomethyl modification enzyme MnmG"/>
    <property type="match status" value="1"/>
</dbReference>
<dbReference type="FunFam" id="3.50.50.60:FF:000010">
    <property type="entry name" value="tRNA uridine 5-carboxymethylaminomethyl modification enzyme MnmG"/>
    <property type="match status" value="1"/>
</dbReference>
<dbReference type="Gene3D" id="3.50.50.60">
    <property type="entry name" value="FAD/NAD(P)-binding domain"/>
    <property type="match status" value="2"/>
</dbReference>
<dbReference type="Gene3D" id="1.10.150.570">
    <property type="entry name" value="GidA associated domain, C-terminal subdomain"/>
    <property type="match status" value="1"/>
</dbReference>
<dbReference type="Gene3D" id="1.10.10.1800">
    <property type="entry name" value="tRNA uridine 5-carboxymethylaminomethyl modification enzyme MnmG/GidA"/>
    <property type="match status" value="1"/>
</dbReference>
<dbReference type="HAMAP" id="MF_00129">
    <property type="entry name" value="MnmG_GidA"/>
    <property type="match status" value="1"/>
</dbReference>
<dbReference type="InterPro" id="IPR036188">
    <property type="entry name" value="FAD/NAD-bd_sf"/>
</dbReference>
<dbReference type="InterPro" id="IPR049312">
    <property type="entry name" value="GIDA_C_N"/>
</dbReference>
<dbReference type="InterPro" id="IPR004416">
    <property type="entry name" value="MnmG"/>
</dbReference>
<dbReference type="InterPro" id="IPR002218">
    <property type="entry name" value="MnmG-rel"/>
</dbReference>
<dbReference type="InterPro" id="IPR020595">
    <property type="entry name" value="MnmG-rel_CS"/>
</dbReference>
<dbReference type="InterPro" id="IPR026904">
    <property type="entry name" value="MnmG_C"/>
</dbReference>
<dbReference type="InterPro" id="IPR047001">
    <property type="entry name" value="MnmG_C_subdom"/>
</dbReference>
<dbReference type="InterPro" id="IPR044920">
    <property type="entry name" value="MnmG_C_subdom_sf"/>
</dbReference>
<dbReference type="InterPro" id="IPR040131">
    <property type="entry name" value="MnmG_N"/>
</dbReference>
<dbReference type="NCBIfam" id="TIGR00136">
    <property type="entry name" value="mnmG_gidA"/>
    <property type="match status" value="1"/>
</dbReference>
<dbReference type="PANTHER" id="PTHR11806">
    <property type="entry name" value="GLUCOSE INHIBITED DIVISION PROTEIN A"/>
    <property type="match status" value="1"/>
</dbReference>
<dbReference type="PANTHER" id="PTHR11806:SF0">
    <property type="entry name" value="PROTEIN MTO1 HOMOLOG, MITOCHONDRIAL"/>
    <property type="match status" value="1"/>
</dbReference>
<dbReference type="Pfam" id="PF01134">
    <property type="entry name" value="GIDA"/>
    <property type="match status" value="1"/>
</dbReference>
<dbReference type="Pfam" id="PF21680">
    <property type="entry name" value="GIDA_C_1st"/>
    <property type="match status" value="1"/>
</dbReference>
<dbReference type="Pfam" id="PF13932">
    <property type="entry name" value="SAM_GIDA_C"/>
    <property type="match status" value="1"/>
</dbReference>
<dbReference type="SMART" id="SM01228">
    <property type="entry name" value="GIDA_assoc_3"/>
    <property type="match status" value="1"/>
</dbReference>
<dbReference type="SUPFAM" id="SSF51905">
    <property type="entry name" value="FAD/NAD(P)-binding domain"/>
    <property type="match status" value="1"/>
</dbReference>
<dbReference type="PROSITE" id="PS01280">
    <property type="entry name" value="GIDA_1"/>
    <property type="match status" value="1"/>
</dbReference>
<dbReference type="PROSITE" id="PS01281">
    <property type="entry name" value="GIDA_2"/>
    <property type="match status" value="1"/>
</dbReference>
<accession>A5F468</accession>
<accession>C3M328</accession>
<evidence type="ECO:0000255" key="1">
    <source>
        <dbReference type="HAMAP-Rule" id="MF_00129"/>
    </source>
</evidence>
<reference key="1">
    <citation type="submission" date="2007-03" db="EMBL/GenBank/DDBJ databases">
        <authorList>
            <person name="Heidelberg J."/>
        </authorList>
    </citation>
    <scope>NUCLEOTIDE SEQUENCE [LARGE SCALE GENOMIC DNA]</scope>
    <source>
        <strain>ATCC 39541 / Classical Ogawa 395 / O395</strain>
    </source>
</reference>
<reference key="2">
    <citation type="journal article" date="2008" name="PLoS ONE">
        <title>A recalibrated molecular clock and independent origins for the cholera pandemic clones.</title>
        <authorList>
            <person name="Feng L."/>
            <person name="Reeves P.R."/>
            <person name="Lan R."/>
            <person name="Ren Y."/>
            <person name="Gao C."/>
            <person name="Zhou Z."/>
            <person name="Ren Y."/>
            <person name="Cheng J."/>
            <person name="Wang W."/>
            <person name="Wang J."/>
            <person name="Qian W."/>
            <person name="Li D."/>
            <person name="Wang L."/>
        </authorList>
    </citation>
    <scope>NUCLEOTIDE SEQUENCE [LARGE SCALE GENOMIC DNA]</scope>
    <source>
        <strain>ATCC 39541 / Classical Ogawa 395 / O395</strain>
    </source>
</reference>
<protein>
    <recommendedName>
        <fullName evidence="1">tRNA uridine 5-carboxymethylaminomethyl modification enzyme MnmG</fullName>
    </recommendedName>
    <alternativeName>
        <fullName evidence="1">Glucose-inhibited division protein A</fullName>
    </alternativeName>
</protein>
<keyword id="KW-0963">Cytoplasm</keyword>
<keyword id="KW-0274">FAD</keyword>
<keyword id="KW-0285">Flavoprotein</keyword>
<keyword id="KW-0520">NAD</keyword>
<keyword id="KW-0819">tRNA processing</keyword>
<feature type="chain" id="PRO_1000071419" description="tRNA uridine 5-carboxymethylaminomethyl modification enzyme MnmG">
    <location>
        <begin position="1"/>
        <end position="631"/>
    </location>
</feature>
<feature type="binding site" evidence="1">
    <location>
        <begin position="13"/>
        <end position="18"/>
    </location>
    <ligand>
        <name>FAD</name>
        <dbReference type="ChEBI" id="CHEBI:57692"/>
    </ligand>
</feature>
<feature type="binding site" evidence="1">
    <location>
        <position position="125"/>
    </location>
    <ligand>
        <name>FAD</name>
        <dbReference type="ChEBI" id="CHEBI:57692"/>
    </ligand>
</feature>
<feature type="binding site" evidence="1">
    <location>
        <position position="180"/>
    </location>
    <ligand>
        <name>FAD</name>
        <dbReference type="ChEBI" id="CHEBI:57692"/>
    </ligand>
</feature>
<feature type="binding site" evidence="1">
    <location>
        <begin position="273"/>
        <end position="287"/>
    </location>
    <ligand>
        <name>NAD(+)</name>
        <dbReference type="ChEBI" id="CHEBI:57540"/>
    </ligand>
</feature>
<feature type="binding site" evidence="1">
    <location>
        <position position="370"/>
    </location>
    <ligand>
        <name>FAD</name>
        <dbReference type="ChEBI" id="CHEBI:57692"/>
    </ligand>
</feature>
<gene>
    <name evidence="1" type="primary">mnmG</name>
    <name evidence="1" type="synonym">gidA</name>
    <name type="ordered locus">VC0395_A2517</name>
    <name type="ordered locus">VC395_0180</name>
</gene>
<name>MNMG_VIBC3</name>